<gene>
    <name evidence="1" type="primary">panC</name>
    <name type="ordered locus">BTH_I0848</name>
</gene>
<proteinExistence type="evidence at protein level"/>
<organism>
    <name type="scientific">Burkholderia thailandensis (strain ATCC 700388 / DSM 13276 / CCUG 48851 / CIP 106301 / E264)</name>
    <dbReference type="NCBI Taxonomy" id="271848"/>
    <lineage>
        <taxon>Bacteria</taxon>
        <taxon>Pseudomonadati</taxon>
        <taxon>Pseudomonadota</taxon>
        <taxon>Betaproteobacteria</taxon>
        <taxon>Burkholderiales</taxon>
        <taxon>Burkholderiaceae</taxon>
        <taxon>Burkholderia</taxon>
        <taxon>pseudomallei group</taxon>
    </lineage>
</organism>
<name>PANC_BURTA</name>
<evidence type="ECO:0000255" key="1">
    <source>
        <dbReference type="HAMAP-Rule" id="MF_00158"/>
    </source>
</evidence>
<evidence type="ECO:0007829" key="2">
    <source>
        <dbReference type="PDB" id="3UK2"/>
    </source>
</evidence>
<comment type="function">
    <text evidence="1">Catalyzes the condensation of pantoate with beta-alanine in an ATP-dependent reaction via a pantoyl-adenylate intermediate.</text>
</comment>
<comment type="catalytic activity">
    <reaction evidence="1">
        <text>(R)-pantoate + beta-alanine + ATP = (R)-pantothenate + AMP + diphosphate + H(+)</text>
        <dbReference type="Rhea" id="RHEA:10912"/>
        <dbReference type="ChEBI" id="CHEBI:15378"/>
        <dbReference type="ChEBI" id="CHEBI:15980"/>
        <dbReference type="ChEBI" id="CHEBI:29032"/>
        <dbReference type="ChEBI" id="CHEBI:30616"/>
        <dbReference type="ChEBI" id="CHEBI:33019"/>
        <dbReference type="ChEBI" id="CHEBI:57966"/>
        <dbReference type="ChEBI" id="CHEBI:456215"/>
        <dbReference type="EC" id="6.3.2.1"/>
    </reaction>
</comment>
<comment type="pathway">
    <text evidence="1">Cofactor biosynthesis; (R)-pantothenate biosynthesis; (R)-pantothenate from (R)-pantoate and beta-alanine: step 1/1.</text>
</comment>
<comment type="subunit">
    <text evidence="1">Homodimer.</text>
</comment>
<comment type="subcellular location">
    <subcellularLocation>
        <location evidence="1">Cytoplasm</location>
    </subcellularLocation>
</comment>
<comment type="miscellaneous">
    <text evidence="1">The reaction proceeds by a bi uni uni bi ping pong mechanism.</text>
</comment>
<comment type="similarity">
    <text evidence="1">Belongs to the pantothenate synthetase family.</text>
</comment>
<sequence length="279" mass="31400">MKVISSIQELRDQLRGQNRTAFVPTMGNLHEGHLSLMRLARQHGDPVVASIFVNRLQFGPNEDFDKYPRTLQEDIEKLQKENVYVLFAPTERDMYPEPQEYRVQPPHDLGDILEGEFRPGFFTGVCTVVTKLMACVQPRVAVFGKKDYQQLMIVRRMCQQLALPVEIVAAETVRDADGLALSSRNRYLSEAERAEAPELAKTLARVRDAVLDGERDLAAIERRAVAHLSARGWQPDYVSIRRRENLVAPSAAQIEAGDPLVVLTAAKLGATRLIDNLEI</sequence>
<feature type="chain" id="PRO_0000305418" description="Pantothenate synthetase">
    <location>
        <begin position="1"/>
        <end position="279"/>
    </location>
</feature>
<feature type="active site" description="Proton donor" evidence="1">
    <location>
        <position position="33"/>
    </location>
</feature>
<feature type="binding site" evidence="1">
    <location>
        <begin position="26"/>
        <end position="33"/>
    </location>
    <ligand>
        <name>ATP</name>
        <dbReference type="ChEBI" id="CHEBI:30616"/>
    </ligand>
</feature>
<feature type="binding site" evidence="1">
    <location>
        <position position="57"/>
    </location>
    <ligand>
        <name>(R)-pantoate</name>
        <dbReference type="ChEBI" id="CHEBI:15980"/>
    </ligand>
</feature>
<feature type="binding site" evidence="1">
    <location>
        <position position="57"/>
    </location>
    <ligand>
        <name>beta-alanine</name>
        <dbReference type="ChEBI" id="CHEBI:57966"/>
    </ligand>
</feature>
<feature type="binding site" evidence="1">
    <location>
        <begin position="144"/>
        <end position="147"/>
    </location>
    <ligand>
        <name>ATP</name>
        <dbReference type="ChEBI" id="CHEBI:30616"/>
    </ligand>
</feature>
<feature type="binding site" evidence="1">
    <location>
        <position position="150"/>
    </location>
    <ligand>
        <name>(R)-pantoate</name>
        <dbReference type="ChEBI" id="CHEBI:15980"/>
    </ligand>
</feature>
<feature type="binding site" evidence="1">
    <location>
        <position position="173"/>
    </location>
    <ligand>
        <name>ATP</name>
        <dbReference type="ChEBI" id="CHEBI:30616"/>
    </ligand>
</feature>
<feature type="binding site" evidence="1">
    <location>
        <begin position="181"/>
        <end position="184"/>
    </location>
    <ligand>
        <name>ATP</name>
        <dbReference type="ChEBI" id="CHEBI:30616"/>
    </ligand>
</feature>
<feature type="strand" evidence="2">
    <location>
        <begin position="2"/>
        <end position="4"/>
    </location>
</feature>
<feature type="helix" evidence="2">
    <location>
        <begin position="7"/>
        <end position="13"/>
    </location>
</feature>
<feature type="turn" evidence="2">
    <location>
        <begin position="14"/>
        <end position="16"/>
    </location>
</feature>
<feature type="strand" evidence="2">
    <location>
        <begin position="21"/>
        <end position="25"/>
    </location>
</feature>
<feature type="helix" evidence="2">
    <location>
        <begin position="31"/>
        <end position="41"/>
    </location>
</feature>
<feature type="strand" evidence="2">
    <location>
        <begin position="45"/>
        <end position="51"/>
    </location>
</feature>
<feature type="helix" evidence="2">
    <location>
        <begin position="55"/>
        <end position="57"/>
    </location>
</feature>
<feature type="turn" evidence="2">
    <location>
        <begin position="64"/>
        <end position="66"/>
    </location>
</feature>
<feature type="helix" evidence="2">
    <location>
        <begin position="71"/>
        <end position="79"/>
    </location>
</feature>
<feature type="turn" evidence="2">
    <location>
        <begin position="80"/>
        <end position="82"/>
    </location>
</feature>
<feature type="strand" evidence="2">
    <location>
        <begin position="84"/>
        <end position="87"/>
    </location>
</feature>
<feature type="helix" evidence="2">
    <location>
        <begin position="91"/>
        <end position="94"/>
    </location>
</feature>
<feature type="helix" evidence="2">
    <location>
        <begin position="107"/>
        <end position="110"/>
    </location>
</feature>
<feature type="helix" evidence="2">
    <location>
        <begin position="114"/>
        <end position="117"/>
    </location>
</feature>
<feature type="helix" evidence="2">
    <location>
        <begin position="121"/>
        <end position="136"/>
    </location>
</feature>
<feature type="strand" evidence="2">
    <location>
        <begin position="139"/>
        <end position="144"/>
    </location>
</feature>
<feature type="helix" evidence="2">
    <location>
        <begin position="148"/>
        <end position="160"/>
    </location>
</feature>
<feature type="strand" evidence="2">
    <location>
        <begin position="166"/>
        <end position="170"/>
    </location>
</feature>
<feature type="helix" evidence="2">
    <location>
        <begin position="183"/>
        <end position="187"/>
    </location>
</feature>
<feature type="helix" evidence="2">
    <location>
        <begin position="190"/>
        <end position="195"/>
    </location>
</feature>
<feature type="helix" evidence="2">
    <location>
        <begin position="198"/>
        <end position="211"/>
    </location>
</feature>
<feature type="helix" evidence="2">
    <location>
        <begin position="217"/>
        <end position="230"/>
    </location>
</feature>
<feature type="strand" evidence="2">
    <location>
        <begin position="234"/>
        <end position="242"/>
    </location>
</feature>
<feature type="turn" evidence="2">
    <location>
        <begin position="243"/>
        <end position="245"/>
    </location>
</feature>
<feature type="helix" evidence="2">
    <location>
        <begin position="251"/>
        <end position="255"/>
    </location>
</feature>
<feature type="strand" evidence="2">
    <location>
        <begin position="260"/>
        <end position="268"/>
    </location>
</feature>
<feature type="strand" evidence="2">
    <location>
        <begin position="271"/>
        <end position="279"/>
    </location>
</feature>
<protein>
    <recommendedName>
        <fullName evidence="1">Pantothenate synthetase</fullName>
        <shortName evidence="1">PS</shortName>
        <ecNumber evidence="1">6.3.2.1</ecNumber>
    </recommendedName>
    <alternativeName>
        <fullName evidence="1">Pantoate--beta-alanine ligase</fullName>
    </alternativeName>
    <alternativeName>
        <fullName evidence="1">Pantoate-activating enzyme</fullName>
    </alternativeName>
</protein>
<reference key="1">
    <citation type="journal article" date="2005" name="BMC Genomics">
        <title>Bacterial genome adaptation to niches: divergence of the potential virulence genes in three Burkholderia species of different survival strategies.</title>
        <authorList>
            <person name="Kim H.S."/>
            <person name="Schell M.A."/>
            <person name="Yu Y."/>
            <person name="Ulrich R.L."/>
            <person name="Sarria S.H."/>
            <person name="Nierman W.C."/>
            <person name="DeShazer D."/>
        </authorList>
    </citation>
    <scope>NUCLEOTIDE SEQUENCE [LARGE SCALE GENOMIC DNA]</scope>
    <source>
        <strain>ATCC 700388 / DSM 13276 / CCUG 48851 / CIP 106301 / E264</strain>
    </source>
</reference>
<dbReference type="EC" id="6.3.2.1" evidence="1"/>
<dbReference type="EMBL" id="CP000086">
    <property type="protein sequence ID" value="ABC39343.1"/>
    <property type="molecule type" value="Genomic_DNA"/>
</dbReference>
<dbReference type="RefSeq" id="WP_009892491.1">
    <property type="nucleotide sequence ID" value="NZ_CP008785.1"/>
</dbReference>
<dbReference type="PDB" id="3UK2">
    <property type="method" value="X-ray"/>
    <property type="resolution" value="2.25 A"/>
    <property type="chains" value="A/B=1-279"/>
</dbReference>
<dbReference type="PDBsum" id="3UK2"/>
<dbReference type="SMR" id="Q2T095"/>
<dbReference type="GeneID" id="45120604"/>
<dbReference type="KEGG" id="bte:BTH_I0848"/>
<dbReference type="HOGENOM" id="CLU_047148_0_0_4"/>
<dbReference type="UniPathway" id="UPA00028">
    <property type="reaction ID" value="UER00005"/>
</dbReference>
<dbReference type="EvolutionaryTrace" id="Q2T095"/>
<dbReference type="Proteomes" id="UP000001930">
    <property type="component" value="Chromosome I"/>
</dbReference>
<dbReference type="GO" id="GO:0005829">
    <property type="term" value="C:cytosol"/>
    <property type="evidence" value="ECO:0007669"/>
    <property type="project" value="TreeGrafter"/>
</dbReference>
<dbReference type="GO" id="GO:0005524">
    <property type="term" value="F:ATP binding"/>
    <property type="evidence" value="ECO:0007669"/>
    <property type="project" value="UniProtKB-KW"/>
</dbReference>
<dbReference type="GO" id="GO:0004592">
    <property type="term" value="F:pantoate-beta-alanine ligase activity"/>
    <property type="evidence" value="ECO:0007669"/>
    <property type="project" value="UniProtKB-UniRule"/>
</dbReference>
<dbReference type="GO" id="GO:0015940">
    <property type="term" value="P:pantothenate biosynthetic process"/>
    <property type="evidence" value="ECO:0007669"/>
    <property type="project" value="UniProtKB-UniRule"/>
</dbReference>
<dbReference type="CDD" id="cd00560">
    <property type="entry name" value="PanC"/>
    <property type="match status" value="1"/>
</dbReference>
<dbReference type="Gene3D" id="3.40.50.620">
    <property type="entry name" value="HUPs"/>
    <property type="match status" value="1"/>
</dbReference>
<dbReference type="Gene3D" id="3.30.1300.10">
    <property type="entry name" value="Pantoate-beta-alanine ligase, C-terminal domain"/>
    <property type="match status" value="1"/>
</dbReference>
<dbReference type="HAMAP" id="MF_00158">
    <property type="entry name" value="PanC"/>
    <property type="match status" value="1"/>
</dbReference>
<dbReference type="InterPro" id="IPR004821">
    <property type="entry name" value="Cyt_trans-like"/>
</dbReference>
<dbReference type="InterPro" id="IPR003721">
    <property type="entry name" value="Pantoate_ligase"/>
</dbReference>
<dbReference type="InterPro" id="IPR042176">
    <property type="entry name" value="Pantoate_ligase_C"/>
</dbReference>
<dbReference type="InterPro" id="IPR014729">
    <property type="entry name" value="Rossmann-like_a/b/a_fold"/>
</dbReference>
<dbReference type="NCBIfam" id="TIGR00125">
    <property type="entry name" value="cyt_tran_rel"/>
    <property type="match status" value="1"/>
</dbReference>
<dbReference type="NCBIfam" id="TIGR00018">
    <property type="entry name" value="panC"/>
    <property type="match status" value="1"/>
</dbReference>
<dbReference type="PANTHER" id="PTHR21299">
    <property type="entry name" value="CYTIDYLATE KINASE/PANTOATE-BETA-ALANINE LIGASE"/>
    <property type="match status" value="1"/>
</dbReference>
<dbReference type="PANTHER" id="PTHR21299:SF1">
    <property type="entry name" value="PANTOATE--BETA-ALANINE LIGASE"/>
    <property type="match status" value="1"/>
</dbReference>
<dbReference type="Pfam" id="PF02569">
    <property type="entry name" value="Pantoate_ligase"/>
    <property type="match status" value="1"/>
</dbReference>
<dbReference type="SUPFAM" id="SSF52374">
    <property type="entry name" value="Nucleotidylyl transferase"/>
    <property type="match status" value="1"/>
</dbReference>
<keyword id="KW-0002">3D-structure</keyword>
<keyword id="KW-0067">ATP-binding</keyword>
<keyword id="KW-0963">Cytoplasm</keyword>
<keyword id="KW-0436">Ligase</keyword>
<keyword id="KW-0547">Nucleotide-binding</keyword>
<keyword id="KW-0566">Pantothenate biosynthesis</keyword>
<accession>Q2T095</accession>